<sequence length="511" mass="57882">MMKMRWLSAAVMLTLYTSSSWAFSIDDVAKQAQSLAGKGYEAPKSNLPSVFRDMKYADYQQIQFNHDKAYWNNLKTPFKLEFYHQGMYFDTPVKINEVTATAVKRIKYSPDYFTFGDVQHDKDTVKDLGFAGFKVLYPINSKDKNDEIVSMLGASYFRVIGAGQVYGLSARGLAIDTALPSGEEFPRFKEFWIERPKPTDKRLTIYALLDSPRATGAYKFVVMPGRDTVVDVQSKIYLRDKVGKLGVAPLTSMFLFGPNQPSPANNYRPELHDSNGLSIHAGNGEWIWRPLNNPKHLAVSSFSMENPQGFGLLQRGRDFSRFEDLDDRYDLRPSAWVTPKGEWGKGSVELVEIPTNDETNDNIVAYWTPDQLPEPGKEMNFKYTITFSRDEDKLHAPDNAWVQQTRRSTGDVKQSNLIRQPDGTIAFVVDFTGAEMKKLPEDTPVTAQTSIGDNGEIVESTVRYNPVTKGWRLVMRVKVKDAKKTTEMRAALVNADQTLSETWSYQLPANE</sequence>
<protein>
    <recommendedName>
        <fullName evidence="1">Glucans biosynthesis protein G</fullName>
    </recommendedName>
</protein>
<organism>
    <name type="scientific">Escherichia coli O127:H6 (strain E2348/69 / EPEC)</name>
    <dbReference type="NCBI Taxonomy" id="574521"/>
    <lineage>
        <taxon>Bacteria</taxon>
        <taxon>Pseudomonadati</taxon>
        <taxon>Pseudomonadota</taxon>
        <taxon>Gammaproteobacteria</taxon>
        <taxon>Enterobacterales</taxon>
        <taxon>Enterobacteriaceae</taxon>
        <taxon>Escherichia</taxon>
    </lineage>
</organism>
<keyword id="KW-0574">Periplasm</keyword>
<keyword id="KW-1185">Reference proteome</keyword>
<keyword id="KW-0732">Signal</keyword>
<reference key="1">
    <citation type="journal article" date="2009" name="J. Bacteriol.">
        <title>Complete genome sequence and comparative genome analysis of enteropathogenic Escherichia coli O127:H6 strain E2348/69.</title>
        <authorList>
            <person name="Iguchi A."/>
            <person name="Thomson N.R."/>
            <person name="Ogura Y."/>
            <person name="Saunders D."/>
            <person name="Ooka T."/>
            <person name="Henderson I.R."/>
            <person name="Harris D."/>
            <person name="Asadulghani M."/>
            <person name="Kurokawa K."/>
            <person name="Dean P."/>
            <person name="Kenny B."/>
            <person name="Quail M.A."/>
            <person name="Thurston S."/>
            <person name="Dougan G."/>
            <person name="Hayashi T."/>
            <person name="Parkhill J."/>
            <person name="Frankel G."/>
        </authorList>
    </citation>
    <scope>NUCLEOTIDE SEQUENCE [LARGE SCALE GENOMIC DNA]</scope>
    <source>
        <strain>E2348/69 / EPEC</strain>
    </source>
</reference>
<proteinExistence type="inferred from homology"/>
<accession>B7UP63</accession>
<dbReference type="EMBL" id="FM180568">
    <property type="protein sequence ID" value="CAS08687.1"/>
    <property type="molecule type" value="Genomic_DNA"/>
</dbReference>
<dbReference type="RefSeq" id="WP_001300662.1">
    <property type="nucleotide sequence ID" value="NC_011601.1"/>
</dbReference>
<dbReference type="SMR" id="B7UP63"/>
<dbReference type="GeneID" id="93776366"/>
<dbReference type="KEGG" id="ecg:E2348C_1139"/>
<dbReference type="HOGENOM" id="CLU_023403_2_0_6"/>
<dbReference type="UniPathway" id="UPA00637"/>
<dbReference type="Proteomes" id="UP000008205">
    <property type="component" value="Chromosome"/>
</dbReference>
<dbReference type="GO" id="GO:0030288">
    <property type="term" value="C:outer membrane-bounded periplasmic space"/>
    <property type="evidence" value="ECO:0007669"/>
    <property type="project" value="TreeGrafter"/>
</dbReference>
<dbReference type="GO" id="GO:0030246">
    <property type="term" value="F:carbohydrate binding"/>
    <property type="evidence" value="ECO:0007669"/>
    <property type="project" value="InterPro"/>
</dbReference>
<dbReference type="GO" id="GO:0003824">
    <property type="term" value="F:catalytic activity"/>
    <property type="evidence" value="ECO:0007669"/>
    <property type="project" value="InterPro"/>
</dbReference>
<dbReference type="GO" id="GO:0051274">
    <property type="term" value="P:beta-glucan biosynthetic process"/>
    <property type="evidence" value="ECO:0007669"/>
    <property type="project" value="TreeGrafter"/>
</dbReference>
<dbReference type="FunFam" id="2.60.40.10:FF:000294">
    <property type="entry name" value="Glucans biosynthesis protein G"/>
    <property type="match status" value="1"/>
</dbReference>
<dbReference type="FunFam" id="2.70.98.10:FF:000001">
    <property type="entry name" value="Glucans biosynthesis protein G"/>
    <property type="match status" value="1"/>
</dbReference>
<dbReference type="Gene3D" id="2.70.98.10">
    <property type="match status" value="1"/>
</dbReference>
<dbReference type="Gene3D" id="2.60.40.10">
    <property type="entry name" value="Immunoglobulins"/>
    <property type="match status" value="1"/>
</dbReference>
<dbReference type="HAMAP" id="MF_01069">
    <property type="entry name" value="MdoG_OpgG"/>
    <property type="match status" value="1"/>
</dbReference>
<dbReference type="InterPro" id="IPR011013">
    <property type="entry name" value="Gal_mutarotase_sf_dom"/>
</dbReference>
<dbReference type="InterPro" id="IPR014718">
    <property type="entry name" value="GH-type_carb-bd"/>
</dbReference>
<dbReference type="InterPro" id="IPR014438">
    <property type="entry name" value="Glucan_biosyn_MdoG/MdoD"/>
</dbReference>
<dbReference type="InterPro" id="IPR007444">
    <property type="entry name" value="Glucan_biosyn_MdoG_C"/>
</dbReference>
<dbReference type="InterPro" id="IPR013783">
    <property type="entry name" value="Ig-like_fold"/>
</dbReference>
<dbReference type="InterPro" id="IPR014756">
    <property type="entry name" value="Ig_E-set"/>
</dbReference>
<dbReference type="InterPro" id="IPR023704">
    <property type="entry name" value="MdoG_OpgG"/>
</dbReference>
<dbReference type="PANTHER" id="PTHR30504">
    <property type="entry name" value="GLUCANS BIOSYNTHESIS PROTEIN"/>
    <property type="match status" value="1"/>
</dbReference>
<dbReference type="PANTHER" id="PTHR30504:SF4">
    <property type="entry name" value="GLUCANS BIOSYNTHESIS PROTEIN G"/>
    <property type="match status" value="1"/>
</dbReference>
<dbReference type="Pfam" id="PF04349">
    <property type="entry name" value="MdoG"/>
    <property type="match status" value="1"/>
</dbReference>
<dbReference type="PIRSF" id="PIRSF006281">
    <property type="entry name" value="MdoG"/>
    <property type="match status" value="1"/>
</dbReference>
<dbReference type="SUPFAM" id="SSF81296">
    <property type="entry name" value="E set domains"/>
    <property type="match status" value="1"/>
</dbReference>
<dbReference type="SUPFAM" id="SSF74650">
    <property type="entry name" value="Galactose mutarotase-like"/>
    <property type="match status" value="1"/>
</dbReference>
<name>OPGG_ECO27</name>
<evidence type="ECO:0000255" key="1">
    <source>
        <dbReference type="HAMAP-Rule" id="MF_01069"/>
    </source>
</evidence>
<comment type="function">
    <text evidence="1">Involved in the biosynthesis of osmoregulated periplasmic glucans (OPGs).</text>
</comment>
<comment type="pathway">
    <text evidence="1">Glycan metabolism; osmoregulated periplasmic glucan (OPG) biosynthesis.</text>
</comment>
<comment type="subcellular location">
    <subcellularLocation>
        <location evidence="1">Periplasm</location>
    </subcellularLocation>
</comment>
<comment type="similarity">
    <text evidence="1">Belongs to the OpgD/OpgG family.</text>
</comment>
<gene>
    <name evidence="1" type="primary">mdoG</name>
    <name evidence="1" type="synonym">opgG</name>
    <name type="ordered locus">E2348C_1139</name>
</gene>
<feature type="signal peptide" evidence="1">
    <location>
        <begin position="1"/>
        <end position="22"/>
    </location>
</feature>
<feature type="chain" id="PRO_1000149746" description="Glucans biosynthesis protein G">
    <location>
        <begin position="23"/>
        <end position="511"/>
    </location>
</feature>